<keyword id="KW-0328">Glycosyltransferase</keyword>
<keyword id="KW-0808">Transferase</keyword>
<comment type="function">
    <text evidence="2">Probably involved in the osmoprotection via the biosynthesis of trehalose and in the production of glycogen and alpha-glucan via the TreS-Pep2 branch involved in the biosynthesis of maltose-1-phosphate (M1P). Catalyzes the transfer of glucose from UDP-glucose (UDP-Glc) to D-glucose 6-phosphate (Glc-6-P) to form trehalose-6-phosphate. Probably also able to use ADP-Glc, CDP-Glc, GDP-Glc and TDP-Glc as glucosyl donors.</text>
</comment>
<comment type="catalytic activity">
    <reaction evidence="2">
        <text>ADP-alpha-D-glucose + D-glucose 6-phosphate = alpha,alpha-trehalose 6-phosphate + ADP + H(+)</text>
        <dbReference type="Rhea" id="RHEA:53880"/>
        <dbReference type="ChEBI" id="CHEBI:15378"/>
        <dbReference type="ChEBI" id="CHEBI:57498"/>
        <dbReference type="ChEBI" id="CHEBI:58429"/>
        <dbReference type="ChEBI" id="CHEBI:61548"/>
        <dbReference type="ChEBI" id="CHEBI:456216"/>
        <dbReference type="EC" id="2.4.1.347"/>
    </reaction>
</comment>
<comment type="catalytic activity">
    <reaction evidence="2">
        <text>CDP-alpha-D-glucose + D-glucose 6-phosphate = alpha,alpha-trehalose 6-phosphate + CDP + H(+)</text>
        <dbReference type="Rhea" id="RHEA:53884"/>
        <dbReference type="ChEBI" id="CHEBI:15378"/>
        <dbReference type="ChEBI" id="CHEBI:58069"/>
        <dbReference type="ChEBI" id="CHEBI:58429"/>
        <dbReference type="ChEBI" id="CHEBI:61548"/>
        <dbReference type="ChEBI" id="CHEBI:137927"/>
    </reaction>
</comment>
<comment type="catalytic activity">
    <reaction evidence="2">
        <text>GDP-alpha-D-glucose + D-glucose 6-phosphate = alpha,alpha-trehalose 6-phosphate + GDP + H(+)</text>
        <dbReference type="Rhea" id="RHEA:14605"/>
        <dbReference type="ChEBI" id="CHEBI:15378"/>
        <dbReference type="ChEBI" id="CHEBI:58189"/>
        <dbReference type="ChEBI" id="CHEBI:58429"/>
        <dbReference type="ChEBI" id="CHEBI:61548"/>
        <dbReference type="ChEBI" id="CHEBI:62230"/>
    </reaction>
</comment>
<comment type="catalytic activity">
    <reaction evidence="2">
        <text>TDP-alpha-D-glucose + D-glucose 6-phosphate = 5-methyl-UDP + alpha,alpha-trehalose 6-phosphate + H(+)</text>
        <dbReference type="Rhea" id="RHEA:53888"/>
        <dbReference type="ChEBI" id="CHEBI:15378"/>
        <dbReference type="ChEBI" id="CHEBI:58429"/>
        <dbReference type="ChEBI" id="CHEBI:61417"/>
        <dbReference type="ChEBI" id="CHEBI:61548"/>
        <dbReference type="ChEBI" id="CHEBI:137931"/>
    </reaction>
</comment>
<comment type="catalytic activity">
    <reaction evidence="2">
        <text>D-glucose 6-phosphate + UDP-alpha-D-glucose = alpha,alpha-trehalose 6-phosphate + UDP + H(+)</text>
        <dbReference type="Rhea" id="RHEA:18889"/>
        <dbReference type="ChEBI" id="CHEBI:15378"/>
        <dbReference type="ChEBI" id="CHEBI:58223"/>
        <dbReference type="ChEBI" id="CHEBI:58429"/>
        <dbReference type="ChEBI" id="CHEBI:58885"/>
        <dbReference type="ChEBI" id="CHEBI:61548"/>
        <dbReference type="EC" id="2.4.1.15"/>
    </reaction>
</comment>
<comment type="pathway">
    <text evidence="2">Glycan biosynthesis; trehalose biosynthesis.</text>
</comment>
<comment type="subunit">
    <text evidence="2">Homotetramer.</text>
</comment>
<comment type="similarity">
    <text evidence="2">Belongs to the glycosyltransferase 20 family.</text>
</comment>
<proteinExistence type="inferred from homology"/>
<reference key="1">
    <citation type="submission" date="2006-12" db="EMBL/GenBank/DDBJ databases">
        <title>Complete sequence of chromosome of Mycobacterium sp. KMS.</title>
        <authorList>
            <consortium name="US DOE Joint Genome Institute"/>
            <person name="Copeland A."/>
            <person name="Lucas S."/>
            <person name="Lapidus A."/>
            <person name="Barry K."/>
            <person name="Detter J.C."/>
            <person name="Glavina del Rio T."/>
            <person name="Hammon N."/>
            <person name="Israni S."/>
            <person name="Dalin E."/>
            <person name="Tice H."/>
            <person name="Pitluck S."/>
            <person name="Kiss H."/>
            <person name="Brettin T."/>
            <person name="Bruce D."/>
            <person name="Han C."/>
            <person name="Tapia R."/>
            <person name="Gilna P."/>
            <person name="Schmutz J."/>
            <person name="Larimer F."/>
            <person name="Land M."/>
            <person name="Hauser L."/>
            <person name="Kyrpides N."/>
            <person name="Mikhailova N."/>
            <person name="Miller C.D."/>
            <person name="Richardson P."/>
        </authorList>
    </citation>
    <scope>NUCLEOTIDE SEQUENCE [LARGE SCALE GENOMIC DNA]</scope>
    <source>
        <strain>KMS</strain>
    </source>
</reference>
<evidence type="ECO:0000250" key="1">
    <source>
        <dbReference type="UniProtKB" id="P31677"/>
    </source>
</evidence>
<evidence type="ECO:0000250" key="2">
    <source>
        <dbReference type="UniProtKB" id="P9WN11"/>
    </source>
</evidence>
<feature type="chain" id="PRO_0000348912" description="Trehalose-6-phosphate synthase">
    <location>
        <begin position="1"/>
        <end position="489"/>
    </location>
</feature>
<feature type="binding site" evidence="1">
    <location>
        <position position="22"/>
    </location>
    <ligand>
        <name>D-glucose 6-phosphate</name>
        <dbReference type="ChEBI" id="CHEBI:61548"/>
    </ligand>
</feature>
<feature type="binding site" evidence="1">
    <location>
        <begin position="42"/>
        <end position="43"/>
    </location>
    <ligand>
        <name>UDP-alpha-D-glucose</name>
        <dbReference type="ChEBI" id="CHEBI:58885"/>
    </ligand>
</feature>
<feature type="binding site" evidence="1">
    <location>
        <position position="94"/>
    </location>
    <ligand>
        <name>D-glucose 6-phosphate</name>
        <dbReference type="ChEBI" id="CHEBI:61548"/>
    </ligand>
</feature>
<feature type="binding site" evidence="1">
    <location>
        <position position="148"/>
    </location>
    <ligand>
        <name>D-glucose 6-phosphate</name>
        <dbReference type="ChEBI" id="CHEBI:61548"/>
    </ligand>
</feature>
<feature type="binding site" evidence="1">
    <location>
        <position position="290"/>
    </location>
    <ligand>
        <name>UDP-alpha-D-glucose</name>
        <dbReference type="ChEBI" id="CHEBI:58885"/>
    </ligand>
</feature>
<feature type="binding site" evidence="1">
    <location>
        <position position="295"/>
    </location>
    <ligand>
        <name>UDP-alpha-D-glucose</name>
        <dbReference type="ChEBI" id="CHEBI:58885"/>
    </ligand>
</feature>
<feature type="binding site" evidence="1">
    <location>
        <position position="328"/>
    </location>
    <ligand>
        <name>D-glucose 6-phosphate</name>
        <dbReference type="ChEBI" id="CHEBI:61548"/>
    </ligand>
</feature>
<feature type="binding site" evidence="1">
    <location>
        <begin position="393"/>
        <end position="397"/>
    </location>
    <ligand>
        <name>UDP-alpha-D-glucose</name>
        <dbReference type="ChEBI" id="CHEBI:58885"/>
    </ligand>
</feature>
<feature type="site" description="Involved in alpha anomer selectivity" evidence="1">
    <location>
        <position position="103"/>
    </location>
</feature>
<feature type="site" description="Involved in alpha anomer selectivity" evidence="1">
    <location>
        <position position="173"/>
    </location>
</feature>
<sequence length="489" mass="54726">MASEGDPGVGSGDSDFVVVANRLPIDMERLPDGSTSFKRSPGGLVTALEPLLRKRHGAWIGWAGIPDSAEDPIEDDGLQLYPVSLSADDVADYYEGFSNATLWPLYHDLIVKPIYHRKWWDRYVEVNRRFAEATARAAAEGATVWVQDYQLQLVPKMLRMLRPDLTIGFFLHIPFPPVELFMQMPWRTEIIEGLLGADLVGFHLPGGAQNFLYLARRLTGANTSRATVGVRSRFGEVQVGFRTVKVGAFPISIDSDELDGKARNRAVRQRAREIRNELGNPRKILLGVDRLDYTKGINVRLEALSELLEDGRVDSHDTVFVQLATPSRERVQSYIEMREDIERQVGHINGEFGDVGHPIVHYLHRPIPRDELIAFFVAADVMLVTPLRDGMNLVAKEYVACRSDLGGALVLSEFTGAAAELRQAYLANPHHLEGVKDAIEAALNQDPEEGRRRMRALRRQVLAHDVDRWARAFLDALADTRAGAKPVRD</sequence>
<name>OTSA_MYCSK</name>
<accession>A1UM30</accession>
<dbReference type="EC" id="2.4.1.15" evidence="2"/>
<dbReference type="EC" id="2.4.1.347" evidence="2"/>
<dbReference type="EMBL" id="CP000518">
    <property type="protein sequence ID" value="ABL93888.1"/>
    <property type="molecule type" value="Genomic_DNA"/>
</dbReference>
<dbReference type="SMR" id="A1UM30"/>
<dbReference type="STRING" id="189918.Mkms_4697"/>
<dbReference type="CAZy" id="GT20">
    <property type="family name" value="Glycosyltransferase Family 20"/>
</dbReference>
<dbReference type="KEGG" id="mkm:Mkms_4697"/>
<dbReference type="HOGENOM" id="CLU_002351_7_1_11"/>
<dbReference type="OrthoDB" id="9761633at2"/>
<dbReference type="UniPathway" id="UPA00299"/>
<dbReference type="GO" id="GO:0005829">
    <property type="term" value="C:cytosol"/>
    <property type="evidence" value="ECO:0007669"/>
    <property type="project" value="TreeGrafter"/>
</dbReference>
<dbReference type="GO" id="GO:0047260">
    <property type="term" value="F:alpha,alpha-trehalose-phosphate synthase (GDP-forming) activity"/>
    <property type="evidence" value="ECO:0007669"/>
    <property type="project" value="RHEA"/>
</dbReference>
<dbReference type="GO" id="GO:0003825">
    <property type="term" value="F:alpha,alpha-trehalose-phosphate synthase (UDP-forming) activity"/>
    <property type="evidence" value="ECO:0007669"/>
    <property type="project" value="UniProtKB-EC"/>
</dbReference>
<dbReference type="GO" id="GO:0004805">
    <property type="term" value="F:trehalose-phosphatase activity"/>
    <property type="evidence" value="ECO:0007669"/>
    <property type="project" value="TreeGrafter"/>
</dbReference>
<dbReference type="GO" id="GO:0005992">
    <property type="term" value="P:trehalose biosynthetic process"/>
    <property type="evidence" value="ECO:0007669"/>
    <property type="project" value="UniProtKB-UniPathway"/>
</dbReference>
<dbReference type="CDD" id="cd03788">
    <property type="entry name" value="GT20_TPS"/>
    <property type="match status" value="1"/>
</dbReference>
<dbReference type="Gene3D" id="3.40.50.2000">
    <property type="entry name" value="Glycogen Phosphorylase B"/>
    <property type="match status" value="2"/>
</dbReference>
<dbReference type="InterPro" id="IPR001830">
    <property type="entry name" value="Glyco_trans_20"/>
</dbReference>
<dbReference type="PANTHER" id="PTHR10788:SF106">
    <property type="entry name" value="BCDNA.GH08860"/>
    <property type="match status" value="1"/>
</dbReference>
<dbReference type="PANTHER" id="PTHR10788">
    <property type="entry name" value="TREHALOSE-6-PHOSPHATE SYNTHASE"/>
    <property type="match status" value="1"/>
</dbReference>
<dbReference type="Pfam" id="PF00982">
    <property type="entry name" value="Glyco_transf_20"/>
    <property type="match status" value="1"/>
</dbReference>
<dbReference type="SUPFAM" id="SSF53756">
    <property type="entry name" value="UDP-Glycosyltransferase/glycogen phosphorylase"/>
    <property type="match status" value="1"/>
</dbReference>
<gene>
    <name evidence="2" type="primary">otsA</name>
    <name type="ordered locus">Mkms_4697</name>
</gene>
<protein>
    <recommendedName>
        <fullName evidence="2">Trehalose-6-phosphate synthase</fullName>
        <shortName evidence="2">TPS</shortName>
        <ecNumber evidence="2">2.4.1.15</ecNumber>
        <ecNumber evidence="2">2.4.1.347</ecNumber>
    </recommendedName>
    <alternativeName>
        <fullName evidence="2">Alpha,alpha-trehalose-phosphate synthase [UDP-forming]</fullName>
    </alternativeName>
    <alternativeName>
        <fullName evidence="1">Osmoregulatory trehalose synthesis protein A</fullName>
        <shortName evidence="1">OtsA</shortName>
    </alternativeName>
</protein>
<organism>
    <name type="scientific">Mycobacterium sp. (strain KMS)</name>
    <dbReference type="NCBI Taxonomy" id="189918"/>
    <lineage>
        <taxon>Bacteria</taxon>
        <taxon>Bacillati</taxon>
        <taxon>Actinomycetota</taxon>
        <taxon>Actinomycetes</taxon>
        <taxon>Mycobacteriales</taxon>
        <taxon>Mycobacteriaceae</taxon>
        <taxon>Mycobacterium</taxon>
    </lineage>
</organism>